<gene>
    <name evidence="1" type="primary">lacC</name>
    <name type="ordered locus">SSA_1697</name>
</gene>
<dbReference type="EC" id="2.7.1.144" evidence="1"/>
<dbReference type="EMBL" id="CP000387">
    <property type="protein sequence ID" value="ABN45080.1"/>
    <property type="molecule type" value="Genomic_DNA"/>
</dbReference>
<dbReference type="RefSeq" id="WP_011837290.1">
    <property type="nucleotide sequence ID" value="NC_009009.1"/>
</dbReference>
<dbReference type="RefSeq" id="YP_001035630.1">
    <property type="nucleotide sequence ID" value="NC_009009.1"/>
</dbReference>
<dbReference type="SMR" id="A3CPH5"/>
<dbReference type="STRING" id="388919.SSA_1697"/>
<dbReference type="KEGG" id="ssa:SSA_1697"/>
<dbReference type="PATRIC" id="fig|388919.9.peg.1609"/>
<dbReference type="eggNOG" id="COG1105">
    <property type="taxonomic scope" value="Bacteria"/>
</dbReference>
<dbReference type="HOGENOM" id="CLU_050013_5_0_9"/>
<dbReference type="OrthoDB" id="9801219at2"/>
<dbReference type="UniPathway" id="UPA00704">
    <property type="reaction ID" value="UER00715"/>
</dbReference>
<dbReference type="Proteomes" id="UP000002148">
    <property type="component" value="Chromosome"/>
</dbReference>
<dbReference type="GO" id="GO:0005829">
    <property type="term" value="C:cytosol"/>
    <property type="evidence" value="ECO:0007669"/>
    <property type="project" value="TreeGrafter"/>
</dbReference>
<dbReference type="GO" id="GO:0005524">
    <property type="term" value="F:ATP binding"/>
    <property type="evidence" value="ECO:0007669"/>
    <property type="project" value="UniProtKB-KW"/>
</dbReference>
<dbReference type="GO" id="GO:0008443">
    <property type="term" value="F:phosphofructokinase activity"/>
    <property type="evidence" value="ECO:0007669"/>
    <property type="project" value="TreeGrafter"/>
</dbReference>
<dbReference type="GO" id="GO:0009024">
    <property type="term" value="F:tagatose-6-phosphate kinase activity"/>
    <property type="evidence" value="ECO:0007669"/>
    <property type="project" value="UniProtKB-UniRule"/>
</dbReference>
<dbReference type="GO" id="GO:2001059">
    <property type="term" value="P:D-tagatose 6-phosphate catabolic process"/>
    <property type="evidence" value="ECO:0007669"/>
    <property type="project" value="UniProtKB-UniRule"/>
</dbReference>
<dbReference type="GO" id="GO:0019512">
    <property type="term" value="P:lactose catabolic process via tagatose-6-phosphate"/>
    <property type="evidence" value="ECO:0007669"/>
    <property type="project" value="InterPro"/>
</dbReference>
<dbReference type="CDD" id="cd01164">
    <property type="entry name" value="FruK_PfkB_like"/>
    <property type="match status" value="1"/>
</dbReference>
<dbReference type="FunFam" id="3.40.1190.20:FF:000001">
    <property type="entry name" value="Phosphofructokinase"/>
    <property type="match status" value="1"/>
</dbReference>
<dbReference type="Gene3D" id="3.40.1190.20">
    <property type="match status" value="1"/>
</dbReference>
<dbReference type="HAMAP" id="MF_01557">
    <property type="entry name" value="LacC"/>
    <property type="match status" value="1"/>
</dbReference>
<dbReference type="InterPro" id="IPR002173">
    <property type="entry name" value="Carboh/pur_kinase_PfkB_CS"/>
</dbReference>
<dbReference type="InterPro" id="IPR005926">
    <property type="entry name" value="LacC"/>
</dbReference>
<dbReference type="InterPro" id="IPR011611">
    <property type="entry name" value="PfkB_dom"/>
</dbReference>
<dbReference type="InterPro" id="IPR029056">
    <property type="entry name" value="Ribokinase-like"/>
</dbReference>
<dbReference type="InterPro" id="IPR017583">
    <property type="entry name" value="Tagatose/fructose_Pkinase"/>
</dbReference>
<dbReference type="NCBIfam" id="TIGR03168">
    <property type="entry name" value="1-PFK"/>
    <property type="match status" value="1"/>
</dbReference>
<dbReference type="NCBIfam" id="TIGR01231">
    <property type="entry name" value="lacC"/>
    <property type="match status" value="1"/>
</dbReference>
<dbReference type="NCBIfam" id="NF010033">
    <property type="entry name" value="PRK13508.1"/>
    <property type="match status" value="1"/>
</dbReference>
<dbReference type="PANTHER" id="PTHR46566:SF5">
    <property type="entry name" value="1-PHOSPHOFRUCTOKINASE"/>
    <property type="match status" value="1"/>
</dbReference>
<dbReference type="PANTHER" id="PTHR46566">
    <property type="entry name" value="1-PHOSPHOFRUCTOKINASE-RELATED"/>
    <property type="match status" value="1"/>
</dbReference>
<dbReference type="Pfam" id="PF00294">
    <property type="entry name" value="PfkB"/>
    <property type="match status" value="1"/>
</dbReference>
<dbReference type="PIRSF" id="PIRSF000535">
    <property type="entry name" value="1PFK/6PFK/LacC"/>
    <property type="match status" value="1"/>
</dbReference>
<dbReference type="SUPFAM" id="SSF53613">
    <property type="entry name" value="Ribokinase-like"/>
    <property type="match status" value="1"/>
</dbReference>
<dbReference type="PROSITE" id="PS00583">
    <property type="entry name" value="PFKB_KINASES_1"/>
    <property type="match status" value="1"/>
</dbReference>
<dbReference type="PROSITE" id="PS00584">
    <property type="entry name" value="PFKB_KINASES_2"/>
    <property type="match status" value="1"/>
</dbReference>
<reference key="1">
    <citation type="journal article" date="2007" name="J. Bacteriol.">
        <title>Genome of the opportunistic pathogen Streptococcus sanguinis.</title>
        <authorList>
            <person name="Xu P."/>
            <person name="Alves J.M."/>
            <person name="Kitten T."/>
            <person name="Brown A."/>
            <person name="Chen Z."/>
            <person name="Ozaki L.S."/>
            <person name="Manque P."/>
            <person name="Ge X."/>
            <person name="Serrano M.G."/>
            <person name="Puiu D."/>
            <person name="Hendricks S."/>
            <person name="Wang Y."/>
            <person name="Chaplin M.D."/>
            <person name="Akan D."/>
            <person name="Paik S."/>
            <person name="Peterson D.L."/>
            <person name="Macrina F.L."/>
            <person name="Buck G.A."/>
        </authorList>
    </citation>
    <scope>NUCLEOTIDE SEQUENCE [LARGE SCALE GENOMIC DNA]</scope>
    <source>
        <strain>SK36</strain>
    </source>
</reference>
<organism>
    <name type="scientific">Streptococcus sanguinis (strain SK36)</name>
    <dbReference type="NCBI Taxonomy" id="388919"/>
    <lineage>
        <taxon>Bacteria</taxon>
        <taxon>Bacillati</taxon>
        <taxon>Bacillota</taxon>
        <taxon>Bacilli</taxon>
        <taxon>Lactobacillales</taxon>
        <taxon>Streptococcaceae</taxon>
        <taxon>Streptococcus</taxon>
    </lineage>
</organism>
<accession>A3CPH5</accession>
<comment type="catalytic activity">
    <reaction evidence="1">
        <text>D-tagatofuranose 6-phosphate + ATP = D-tagatofuranose 1,6-bisphosphate + ADP + H(+)</text>
        <dbReference type="Rhea" id="RHEA:12420"/>
        <dbReference type="ChEBI" id="CHEBI:15378"/>
        <dbReference type="ChEBI" id="CHEBI:30616"/>
        <dbReference type="ChEBI" id="CHEBI:58694"/>
        <dbReference type="ChEBI" id="CHEBI:58695"/>
        <dbReference type="ChEBI" id="CHEBI:456216"/>
        <dbReference type="EC" id="2.7.1.144"/>
    </reaction>
</comment>
<comment type="pathway">
    <text evidence="1">Carbohydrate metabolism; D-tagatose 6-phosphate degradation; D-glyceraldehyde 3-phosphate and glycerone phosphate from D-tagatose 6-phosphate: step 1/2.</text>
</comment>
<comment type="similarity">
    <text evidence="1">Belongs to the carbohydrate kinase PfkB family. LacC subfamily.</text>
</comment>
<name>LACC_STRSV</name>
<keyword id="KW-0067">ATP-binding</keyword>
<keyword id="KW-0418">Kinase</keyword>
<keyword id="KW-0423">Lactose metabolism</keyword>
<keyword id="KW-0547">Nucleotide-binding</keyword>
<keyword id="KW-1185">Reference proteome</keyword>
<keyword id="KW-0808">Transferase</keyword>
<evidence type="ECO:0000255" key="1">
    <source>
        <dbReference type="HAMAP-Rule" id="MF_01557"/>
    </source>
</evidence>
<protein>
    <recommendedName>
        <fullName evidence="1">Tagatose-6-phosphate kinase</fullName>
        <ecNumber evidence="1">2.7.1.144</ecNumber>
    </recommendedName>
    <alternativeName>
        <fullName evidence="1">Phosphotagatokinase</fullName>
    </alternativeName>
</protein>
<proteinExistence type="inferred from homology"/>
<sequence>MILTVTMNPSIDISYPLEELKIDTVNRVSEVSKTAGGKGLNVTRVLAEIGDNVAATGLIGGTNGEFLLQNLNQAVRPLFYNISGDTRNCIAILHESKQTEILEAGPTITVDEANGFLHHFKSLMESAEVVSISGSLPAGLPVEYYIQLVEIANQAGNKVVLDCSGAALEAVLKSDVKPTAIKPNNEELSQLLGREVSKDLDELKAVLSEPLFDGIEWIIVSLGADGAFAKHWETFYKVDIPKIQVVNPVGSGDSTVAGISSALSHQADDVSLLKKANVLGMLNAQEKMTGHVNVENYDDLYNQITVKEV</sequence>
<feature type="chain" id="PRO_1000068944" description="Tagatose-6-phosphate kinase">
    <location>
        <begin position="1"/>
        <end position="309"/>
    </location>
</feature>